<organism>
    <name type="scientific">Streptococcus pneumoniae serotype 4 (strain ATCC BAA-334 / TIGR4)</name>
    <dbReference type="NCBI Taxonomy" id="170187"/>
    <lineage>
        <taxon>Bacteria</taxon>
        <taxon>Bacillati</taxon>
        <taxon>Bacillota</taxon>
        <taxon>Bacilli</taxon>
        <taxon>Lactobacillales</taxon>
        <taxon>Streptococcaceae</taxon>
        <taxon>Streptococcus</taxon>
    </lineage>
</organism>
<sequence length="71" mass="8451">MRKSFYTWLMTERNPKSNSPKAILADLAFEESAFPKHTDDFDEVSRFLEEHASFSFNLGDFDSIWQEYLEH</sequence>
<keyword id="KW-1185">Reference proteome</keyword>
<feature type="chain" id="PRO_0000164294" description="UPF0346 protein SP_0947">
    <location>
        <begin position="1"/>
        <end position="71"/>
    </location>
</feature>
<gene>
    <name type="ordered locus">SP_0947</name>
</gene>
<protein>
    <recommendedName>
        <fullName evidence="1">UPF0346 protein SP_0947</fullName>
    </recommendedName>
</protein>
<accession>Q97R80</accession>
<name>Y947_STRPN</name>
<dbReference type="EMBL" id="AE005672">
    <property type="protein sequence ID" value="AAK75070.1"/>
    <property type="molecule type" value="Genomic_DNA"/>
</dbReference>
<dbReference type="PIR" id="E95109">
    <property type="entry name" value="E95109"/>
</dbReference>
<dbReference type="RefSeq" id="WP_001232085.1">
    <property type="nucleotide sequence ID" value="NZ_CP155539.1"/>
</dbReference>
<dbReference type="SMR" id="Q97R80"/>
<dbReference type="IntAct" id="Q97R80">
    <property type="interactions" value="1"/>
</dbReference>
<dbReference type="PaxDb" id="170187-SP_0947"/>
<dbReference type="EnsemblBacteria" id="AAK75070">
    <property type="protein sequence ID" value="AAK75070"/>
    <property type="gene ID" value="SP_0947"/>
</dbReference>
<dbReference type="KEGG" id="spn:SP_0947"/>
<dbReference type="eggNOG" id="COG4479">
    <property type="taxonomic scope" value="Bacteria"/>
</dbReference>
<dbReference type="PhylomeDB" id="Q97R80"/>
<dbReference type="BioCyc" id="SPNE170187:G1FZB-973-MONOMER"/>
<dbReference type="Proteomes" id="UP000000585">
    <property type="component" value="Chromosome"/>
</dbReference>
<dbReference type="Gene3D" id="1.10.150.260">
    <property type="entry name" value="YozE SAM-like"/>
    <property type="match status" value="1"/>
</dbReference>
<dbReference type="HAMAP" id="MF_01538">
    <property type="entry name" value="UPF0346"/>
    <property type="match status" value="1"/>
</dbReference>
<dbReference type="InterPro" id="IPR010673">
    <property type="entry name" value="UPF0346"/>
</dbReference>
<dbReference type="InterPro" id="IPR023089">
    <property type="entry name" value="YozE_SAM-like"/>
</dbReference>
<dbReference type="InterPro" id="IPR036806">
    <property type="entry name" value="YozE_SAM-like_sf"/>
</dbReference>
<dbReference type="NCBIfam" id="NF010193">
    <property type="entry name" value="PRK13672.1"/>
    <property type="match status" value="1"/>
</dbReference>
<dbReference type="Pfam" id="PF06855">
    <property type="entry name" value="YozE_SAM_like"/>
    <property type="match status" value="1"/>
</dbReference>
<dbReference type="PIRSF" id="PIRSF037262">
    <property type="entry name" value="UCP037262"/>
    <property type="match status" value="1"/>
</dbReference>
<dbReference type="SUPFAM" id="SSF140652">
    <property type="entry name" value="YozE-like"/>
    <property type="match status" value="1"/>
</dbReference>
<reference key="1">
    <citation type="journal article" date="2001" name="Science">
        <title>Complete genome sequence of a virulent isolate of Streptococcus pneumoniae.</title>
        <authorList>
            <person name="Tettelin H."/>
            <person name="Nelson K.E."/>
            <person name="Paulsen I.T."/>
            <person name="Eisen J.A."/>
            <person name="Read T.D."/>
            <person name="Peterson S.N."/>
            <person name="Heidelberg J.F."/>
            <person name="DeBoy R.T."/>
            <person name="Haft D.H."/>
            <person name="Dodson R.J."/>
            <person name="Durkin A.S."/>
            <person name="Gwinn M.L."/>
            <person name="Kolonay J.F."/>
            <person name="Nelson W.C."/>
            <person name="Peterson J.D."/>
            <person name="Umayam L.A."/>
            <person name="White O."/>
            <person name="Salzberg S.L."/>
            <person name="Lewis M.R."/>
            <person name="Radune D."/>
            <person name="Holtzapple E.K."/>
            <person name="Khouri H.M."/>
            <person name="Wolf A.M."/>
            <person name="Utterback T.R."/>
            <person name="Hansen C.L."/>
            <person name="McDonald L.A."/>
            <person name="Feldblyum T.V."/>
            <person name="Angiuoli S.V."/>
            <person name="Dickinson T."/>
            <person name="Hickey E.K."/>
            <person name="Holt I.E."/>
            <person name="Loftus B.J."/>
            <person name="Yang F."/>
            <person name="Smith H.O."/>
            <person name="Venter J.C."/>
            <person name="Dougherty B.A."/>
            <person name="Morrison D.A."/>
            <person name="Hollingshead S.K."/>
            <person name="Fraser C.M."/>
        </authorList>
    </citation>
    <scope>NUCLEOTIDE SEQUENCE [LARGE SCALE GENOMIC DNA]</scope>
    <source>
        <strain>ATCC BAA-334 / TIGR4</strain>
    </source>
</reference>
<proteinExistence type="evidence at protein level"/>
<comment type="interaction">
    <interactant intactId="EBI-6474606">
        <id>Q97R80</id>
    </interactant>
    <interactant intactId="EBI-6474612">
        <id>A0A0H2UMS9</id>
        <label>SP_0029</label>
    </interactant>
    <organismsDiffer>false</organismsDiffer>
    <experiments>4</experiments>
</comment>
<comment type="similarity">
    <text evidence="1">Belongs to the UPF0346 family.</text>
</comment>
<evidence type="ECO:0000255" key="1">
    <source>
        <dbReference type="HAMAP-Rule" id="MF_01538"/>
    </source>
</evidence>